<accession>A9ADJ2</accession>
<keyword id="KW-1185">Reference proteome</keyword>
<keyword id="KW-0687">Ribonucleoprotein</keyword>
<keyword id="KW-0689">Ribosomal protein</keyword>
<feature type="chain" id="PRO_1000127092" description="Small ribosomal subunit protein uS10">
    <location>
        <begin position="1"/>
        <end position="103"/>
    </location>
</feature>
<proteinExistence type="inferred from homology"/>
<dbReference type="EMBL" id="CP000868">
    <property type="protein sequence ID" value="ABX13943.1"/>
    <property type="molecule type" value="Genomic_DNA"/>
</dbReference>
<dbReference type="EMBL" id="AP009385">
    <property type="protein sequence ID" value="BAG44891.1"/>
    <property type="molecule type" value="Genomic_DNA"/>
</dbReference>
<dbReference type="RefSeq" id="WP_004199280.1">
    <property type="nucleotide sequence ID" value="NC_010804.1"/>
</dbReference>
<dbReference type="SMR" id="A9ADJ2"/>
<dbReference type="STRING" id="395019.BMULJ_03006"/>
<dbReference type="GeneID" id="98107161"/>
<dbReference type="KEGG" id="bmj:BMULJ_03006"/>
<dbReference type="KEGG" id="bmu:Bmul_0248"/>
<dbReference type="eggNOG" id="COG0051">
    <property type="taxonomic scope" value="Bacteria"/>
</dbReference>
<dbReference type="HOGENOM" id="CLU_122625_1_3_4"/>
<dbReference type="Proteomes" id="UP000008815">
    <property type="component" value="Chromosome 1"/>
</dbReference>
<dbReference type="GO" id="GO:1990904">
    <property type="term" value="C:ribonucleoprotein complex"/>
    <property type="evidence" value="ECO:0007669"/>
    <property type="project" value="UniProtKB-KW"/>
</dbReference>
<dbReference type="GO" id="GO:0005840">
    <property type="term" value="C:ribosome"/>
    <property type="evidence" value="ECO:0007669"/>
    <property type="project" value="UniProtKB-KW"/>
</dbReference>
<dbReference type="GO" id="GO:0003735">
    <property type="term" value="F:structural constituent of ribosome"/>
    <property type="evidence" value="ECO:0007669"/>
    <property type="project" value="InterPro"/>
</dbReference>
<dbReference type="GO" id="GO:0000049">
    <property type="term" value="F:tRNA binding"/>
    <property type="evidence" value="ECO:0007669"/>
    <property type="project" value="UniProtKB-UniRule"/>
</dbReference>
<dbReference type="GO" id="GO:0006412">
    <property type="term" value="P:translation"/>
    <property type="evidence" value="ECO:0007669"/>
    <property type="project" value="UniProtKB-UniRule"/>
</dbReference>
<dbReference type="FunFam" id="3.30.70.600:FF:000001">
    <property type="entry name" value="30S ribosomal protein S10"/>
    <property type="match status" value="1"/>
</dbReference>
<dbReference type="Gene3D" id="3.30.70.600">
    <property type="entry name" value="Ribosomal protein S10 domain"/>
    <property type="match status" value="1"/>
</dbReference>
<dbReference type="HAMAP" id="MF_00508">
    <property type="entry name" value="Ribosomal_uS10"/>
    <property type="match status" value="1"/>
</dbReference>
<dbReference type="InterPro" id="IPR001848">
    <property type="entry name" value="Ribosomal_uS10"/>
</dbReference>
<dbReference type="InterPro" id="IPR018268">
    <property type="entry name" value="Ribosomal_uS10_CS"/>
</dbReference>
<dbReference type="InterPro" id="IPR027486">
    <property type="entry name" value="Ribosomal_uS10_dom"/>
</dbReference>
<dbReference type="InterPro" id="IPR036838">
    <property type="entry name" value="Ribosomal_uS10_dom_sf"/>
</dbReference>
<dbReference type="NCBIfam" id="NF001861">
    <property type="entry name" value="PRK00596.1"/>
    <property type="match status" value="1"/>
</dbReference>
<dbReference type="NCBIfam" id="TIGR01049">
    <property type="entry name" value="rpsJ_bact"/>
    <property type="match status" value="1"/>
</dbReference>
<dbReference type="PANTHER" id="PTHR11700">
    <property type="entry name" value="30S RIBOSOMAL PROTEIN S10 FAMILY MEMBER"/>
    <property type="match status" value="1"/>
</dbReference>
<dbReference type="Pfam" id="PF00338">
    <property type="entry name" value="Ribosomal_S10"/>
    <property type="match status" value="1"/>
</dbReference>
<dbReference type="PRINTS" id="PR00971">
    <property type="entry name" value="RIBOSOMALS10"/>
</dbReference>
<dbReference type="SMART" id="SM01403">
    <property type="entry name" value="Ribosomal_S10"/>
    <property type="match status" value="1"/>
</dbReference>
<dbReference type="SUPFAM" id="SSF54999">
    <property type="entry name" value="Ribosomal protein S10"/>
    <property type="match status" value="1"/>
</dbReference>
<dbReference type="PROSITE" id="PS00361">
    <property type="entry name" value="RIBOSOMAL_S10"/>
    <property type="match status" value="1"/>
</dbReference>
<name>RS10_BURM1</name>
<evidence type="ECO:0000255" key="1">
    <source>
        <dbReference type="HAMAP-Rule" id="MF_00508"/>
    </source>
</evidence>
<evidence type="ECO:0000305" key="2"/>
<comment type="function">
    <text evidence="1">Involved in the binding of tRNA to the ribosomes.</text>
</comment>
<comment type="subunit">
    <text evidence="1">Part of the 30S ribosomal subunit.</text>
</comment>
<comment type="similarity">
    <text evidence="1">Belongs to the universal ribosomal protein uS10 family.</text>
</comment>
<organism>
    <name type="scientific">Burkholderia multivorans (strain ATCC 17616 / 249)</name>
    <dbReference type="NCBI Taxonomy" id="395019"/>
    <lineage>
        <taxon>Bacteria</taxon>
        <taxon>Pseudomonadati</taxon>
        <taxon>Pseudomonadota</taxon>
        <taxon>Betaproteobacteria</taxon>
        <taxon>Burkholderiales</taxon>
        <taxon>Burkholderiaceae</taxon>
        <taxon>Burkholderia</taxon>
        <taxon>Burkholderia cepacia complex</taxon>
    </lineage>
</organism>
<sequence length="103" mass="11828">MQQQKIRIRLKAFDYRLIDQSAAEIVDTAKRTGAIVRGPVPLPTRIQRFDILRSPHVNKTSRDQLEIRTHQRLMDIVDPTDKTVDALMKLDLPAGVDVEIKLQ</sequence>
<reference key="1">
    <citation type="submission" date="2007-10" db="EMBL/GenBank/DDBJ databases">
        <title>Complete sequence of chromosome 1 of Burkholderia multivorans ATCC 17616.</title>
        <authorList>
            <person name="Copeland A."/>
            <person name="Lucas S."/>
            <person name="Lapidus A."/>
            <person name="Barry K."/>
            <person name="Glavina del Rio T."/>
            <person name="Dalin E."/>
            <person name="Tice H."/>
            <person name="Pitluck S."/>
            <person name="Chain P."/>
            <person name="Malfatti S."/>
            <person name="Shin M."/>
            <person name="Vergez L."/>
            <person name="Schmutz J."/>
            <person name="Larimer F."/>
            <person name="Land M."/>
            <person name="Hauser L."/>
            <person name="Kyrpides N."/>
            <person name="Kim E."/>
            <person name="Tiedje J."/>
            <person name="Richardson P."/>
        </authorList>
    </citation>
    <scope>NUCLEOTIDE SEQUENCE [LARGE SCALE GENOMIC DNA]</scope>
    <source>
        <strain>ATCC 17616 / 249</strain>
    </source>
</reference>
<reference key="2">
    <citation type="submission" date="2007-04" db="EMBL/GenBank/DDBJ databases">
        <title>Complete genome sequence of Burkholderia multivorans ATCC 17616.</title>
        <authorList>
            <person name="Ohtsubo Y."/>
            <person name="Yamashita A."/>
            <person name="Kurokawa K."/>
            <person name="Takami H."/>
            <person name="Yuhara S."/>
            <person name="Nishiyama E."/>
            <person name="Endo R."/>
            <person name="Miyazaki R."/>
            <person name="Ono A."/>
            <person name="Yano K."/>
            <person name="Ito M."/>
            <person name="Sota M."/>
            <person name="Yuji N."/>
            <person name="Hattori M."/>
            <person name="Tsuda M."/>
        </authorList>
    </citation>
    <scope>NUCLEOTIDE SEQUENCE [LARGE SCALE GENOMIC DNA]</scope>
    <source>
        <strain>ATCC 17616 / 249</strain>
    </source>
</reference>
<gene>
    <name evidence="1" type="primary">rpsJ</name>
    <name type="ordered locus">Bmul_0248</name>
    <name type="ordered locus">BMULJ_03006</name>
</gene>
<protein>
    <recommendedName>
        <fullName evidence="1">Small ribosomal subunit protein uS10</fullName>
    </recommendedName>
    <alternativeName>
        <fullName evidence="2">30S ribosomal protein S10</fullName>
    </alternativeName>
</protein>